<feature type="chain" id="PRO_0000333382" description="ATP-dependent DNA helicase MPH1">
    <location>
        <begin position="1"/>
        <end position="993"/>
    </location>
</feature>
<feature type="domain" description="Helicase ATP-binding" evidence="3">
    <location>
        <begin position="94"/>
        <end position="261"/>
    </location>
</feature>
<feature type="domain" description="Helicase C-terminal" evidence="4">
    <location>
        <begin position="507"/>
        <end position="655"/>
    </location>
</feature>
<feature type="region of interest" description="Disordered" evidence="5">
    <location>
        <begin position="530"/>
        <end position="551"/>
    </location>
</feature>
<feature type="short sequence motif" description="DEAH box" evidence="3">
    <location>
        <begin position="209"/>
        <end position="212"/>
    </location>
</feature>
<feature type="compositionally biased region" description="Polar residues" evidence="5">
    <location>
        <begin position="539"/>
        <end position="551"/>
    </location>
</feature>
<feature type="binding site" evidence="3">
    <location>
        <begin position="107"/>
        <end position="114"/>
    </location>
    <ligand>
        <name>ATP</name>
        <dbReference type="ChEBI" id="CHEBI:30616"/>
    </ligand>
</feature>
<name>MPH1_YEAS7</name>
<protein>
    <recommendedName>
        <fullName evidence="1">ATP-dependent DNA helicase MPH1</fullName>
        <ecNumber evidence="1 2">3.6.4.12</ecNumber>
    </recommendedName>
    <alternativeName>
        <fullName evidence="2">FANCM-like protein 1</fullName>
    </alternativeName>
    <alternativeName>
        <fullName evidence="1">Mutator phenotype protein 1</fullName>
    </alternativeName>
</protein>
<evidence type="ECO:0000250" key="1">
    <source>
        <dbReference type="UniProtKB" id="P40562"/>
    </source>
</evidence>
<evidence type="ECO:0000250" key="2">
    <source>
        <dbReference type="UniProtKB" id="Q9UT23"/>
    </source>
</evidence>
<evidence type="ECO:0000255" key="3">
    <source>
        <dbReference type="PROSITE-ProRule" id="PRU00541"/>
    </source>
</evidence>
<evidence type="ECO:0000255" key="4">
    <source>
        <dbReference type="PROSITE-ProRule" id="PRU00542"/>
    </source>
</evidence>
<evidence type="ECO:0000256" key="5">
    <source>
        <dbReference type="SAM" id="MobiDB-lite"/>
    </source>
</evidence>
<evidence type="ECO:0000305" key="6"/>
<proteinExistence type="inferred from homology"/>
<sequence length="993" mass="114205">MASADDYFSDFEDDELDKLYEKAINKSVKETITRRAVPVQKDLHDNVLPGQKTVYEEIQRDVSFGPTHHELDYDALSFYVYPTNYEVRDYQYTIVHKSLFQNTLCAIPTGMGKTFIASTVMLNYFRWTKKAKIIFTAPTRPLVAQQIKACLGITGIPSDQTAILLDKSRKNREEIWANKRVFFATPQVVENDLKRGVLDPKDIVCLVIDEAHRATGSYAYTNVVKFIDRFNSSYRLLALTATPASDLEGVQEVVNNLDISKIEIRTEESMDIVKYMKKRKKEKIEVPLLLEIEDIIEQLGIAVKPVLQQAIELGIYEECDPSQINAFKAMQQSQKIIANPTIPEGIKWRNFFILQLLNNVGQMLKRLKIYGIRTFFNYFQNKCTEFTTKYNLKKSTNKIAAEFYYHPILKNIKNQCENYLSDPKFVGHGKLQCVRDELMEFFQKRGSDSRVIIFTELRESALEIVKFIDSVANDQIRPHIFIGQARAKEGFDEVKYTRKHAPKGRKKVERLHRQEQEKFLEAERTKRAANDKLERSARRTGSSEEAQISGMNQKMQKEVIHNFKKGEYNVLVCTSIGEEGLDIGEVDLIICYDTTSSPIKNIQRMGRTGRKRDGKIVLLFSSNESYKFERAMEDYSTLQALISKQCIDYKKSDRIIPEDIIPECHETLITINDENEIINEMEDVDEVIRYATQCMMGKKVKPKKAITKKKRVQENKKPKKFFMPDNVETSIVSASTLINKFLVNESGGKQLVTSNENPSKKRKIFKALDNLENDSTEEASSSLETEDEEFSDDNNVFIAEGQNGCQKDLETAIIRTGESLTTLKPLHNFERPNMALFVNDCGLPTKIEKNVKDIRGNQHNLEKEKNCTVDKNNMVLSLDDWNFFRDRYIPEGVSFDVEPNFVQYTKGVKVPHCHKVSKIITLFNDESNDNKKRTIDMNYTKCLARGMLRDEKKFVKVNDKSQVDNNSVNHDSSQSFTLSNAELDDILGSDSDF</sequence>
<accession>A6ZVS0</accession>
<reference key="1">
    <citation type="journal article" date="2007" name="Proc. Natl. Acad. Sci. U.S.A.">
        <title>Genome sequencing and comparative analysis of Saccharomyces cerevisiae strain YJM789.</title>
        <authorList>
            <person name="Wei W."/>
            <person name="McCusker J.H."/>
            <person name="Hyman R.W."/>
            <person name="Jones T."/>
            <person name="Ning Y."/>
            <person name="Cao Z."/>
            <person name="Gu Z."/>
            <person name="Bruno D."/>
            <person name="Miranda M."/>
            <person name="Nguyen M."/>
            <person name="Wilhelmy J."/>
            <person name="Komp C."/>
            <person name="Tamse R."/>
            <person name="Wang X."/>
            <person name="Jia P."/>
            <person name="Luedi P."/>
            <person name="Oefner P.J."/>
            <person name="David L."/>
            <person name="Dietrich F.S."/>
            <person name="Li Y."/>
            <person name="Davis R.W."/>
            <person name="Steinmetz L.M."/>
        </authorList>
    </citation>
    <scope>NUCLEOTIDE SEQUENCE [LARGE SCALE GENOMIC DNA]</scope>
    <source>
        <strain>YJM789</strain>
    </source>
</reference>
<comment type="function">
    <text evidence="2">ATP-dependent DNA helicase involved in DNA damage repair by homologous recombination and in genome maintenance. Capable of unwinding D-loops. Plays a role in limiting crossover recombinants during mitotic DNA double-strand break (DSB) repair. Component of a FANCM-MHF complex which promotes gene conversion at blocked replication forks, probably by reversal of the stalled fork.</text>
</comment>
<comment type="catalytic activity">
    <reaction evidence="2">
        <text>ATP + H2O = ADP + phosphate + H(+)</text>
        <dbReference type="Rhea" id="RHEA:13065"/>
        <dbReference type="ChEBI" id="CHEBI:15377"/>
        <dbReference type="ChEBI" id="CHEBI:15378"/>
        <dbReference type="ChEBI" id="CHEBI:30616"/>
        <dbReference type="ChEBI" id="CHEBI:43474"/>
        <dbReference type="ChEBI" id="CHEBI:456216"/>
        <dbReference type="EC" id="3.6.4.12"/>
    </reaction>
</comment>
<comment type="subunit">
    <text evidence="2">Interacts with the MHF histone-fold complex to form the FANCM-MHF complex.</text>
</comment>
<comment type="subcellular location">
    <subcellularLocation>
        <location evidence="1">Nucleus</location>
    </subcellularLocation>
</comment>
<comment type="similarity">
    <text evidence="6">Belongs to the DEAD box helicase family. DEAH subfamily. FANCM sub-subfamily.</text>
</comment>
<gene>
    <name evidence="1" type="primary">MPH1</name>
    <name type="ORF">SCY_2786</name>
</gene>
<organism>
    <name type="scientific">Saccharomyces cerevisiae (strain YJM789)</name>
    <name type="common">Baker's yeast</name>
    <dbReference type="NCBI Taxonomy" id="307796"/>
    <lineage>
        <taxon>Eukaryota</taxon>
        <taxon>Fungi</taxon>
        <taxon>Dikarya</taxon>
        <taxon>Ascomycota</taxon>
        <taxon>Saccharomycotina</taxon>
        <taxon>Saccharomycetes</taxon>
        <taxon>Saccharomycetales</taxon>
        <taxon>Saccharomycetaceae</taxon>
        <taxon>Saccharomyces</taxon>
    </lineage>
</organism>
<dbReference type="EC" id="3.6.4.12" evidence="1 2"/>
<dbReference type="EMBL" id="AAFW02000124">
    <property type="protein sequence ID" value="EDN61495.1"/>
    <property type="molecule type" value="Genomic_DNA"/>
</dbReference>
<dbReference type="SMR" id="A6ZVS0"/>
<dbReference type="HOGENOM" id="CLU_002513_1_0_1"/>
<dbReference type="Proteomes" id="UP000007060">
    <property type="component" value="Unassembled WGS sequence"/>
</dbReference>
<dbReference type="GO" id="GO:0005634">
    <property type="term" value="C:nucleus"/>
    <property type="evidence" value="ECO:0007669"/>
    <property type="project" value="UniProtKB-SubCell"/>
</dbReference>
<dbReference type="GO" id="GO:0043138">
    <property type="term" value="F:3'-5' DNA helicase activity"/>
    <property type="evidence" value="ECO:0007669"/>
    <property type="project" value="InterPro"/>
</dbReference>
<dbReference type="GO" id="GO:0005524">
    <property type="term" value="F:ATP binding"/>
    <property type="evidence" value="ECO:0007669"/>
    <property type="project" value="UniProtKB-KW"/>
</dbReference>
<dbReference type="GO" id="GO:0016887">
    <property type="term" value="F:ATP hydrolysis activity"/>
    <property type="evidence" value="ECO:0007669"/>
    <property type="project" value="RHEA"/>
</dbReference>
<dbReference type="GO" id="GO:0000400">
    <property type="term" value="F:four-way junction DNA binding"/>
    <property type="evidence" value="ECO:0007669"/>
    <property type="project" value="TreeGrafter"/>
</dbReference>
<dbReference type="GO" id="GO:0009378">
    <property type="term" value="F:four-way junction helicase activity"/>
    <property type="evidence" value="ECO:0007669"/>
    <property type="project" value="TreeGrafter"/>
</dbReference>
<dbReference type="GO" id="GO:0045003">
    <property type="term" value="P:double-strand break repair via synthesis-dependent strand annealing"/>
    <property type="evidence" value="ECO:0007669"/>
    <property type="project" value="TreeGrafter"/>
</dbReference>
<dbReference type="GO" id="GO:0036297">
    <property type="term" value="P:interstrand cross-link repair"/>
    <property type="evidence" value="ECO:0007669"/>
    <property type="project" value="TreeGrafter"/>
</dbReference>
<dbReference type="CDD" id="cd18033">
    <property type="entry name" value="DEXDc_FANCM"/>
    <property type="match status" value="1"/>
</dbReference>
<dbReference type="CDD" id="cd12091">
    <property type="entry name" value="FANCM_ID"/>
    <property type="match status" value="1"/>
</dbReference>
<dbReference type="CDD" id="cd18801">
    <property type="entry name" value="SF2_C_FANCM_Hef"/>
    <property type="match status" value="1"/>
</dbReference>
<dbReference type="FunFam" id="3.40.50.300:FF:000861">
    <property type="entry name" value="Fanconi anemia, complementation group M"/>
    <property type="match status" value="1"/>
</dbReference>
<dbReference type="Gene3D" id="3.40.50.300">
    <property type="entry name" value="P-loop containing nucleotide triphosphate hydrolases"/>
    <property type="match status" value="2"/>
</dbReference>
<dbReference type="InterPro" id="IPR039686">
    <property type="entry name" value="FANCM/Mph1-like_ID"/>
</dbReference>
<dbReference type="InterPro" id="IPR044749">
    <property type="entry name" value="FANCM_DEXDc"/>
</dbReference>
<dbReference type="InterPro" id="IPR006935">
    <property type="entry name" value="Helicase/UvrB_N"/>
</dbReference>
<dbReference type="InterPro" id="IPR014001">
    <property type="entry name" value="Helicase_ATP-bd"/>
</dbReference>
<dbReference type="InterPro" id="IPR001650">
    <property type="entry name" value="Helicase_C-like"/>
</dbReference>
<dbReference type="InterPro" id="IPR027417">
    <property type="entry name" value="P-loop_NTPase"/>
</dbReference>
<dbReference type="PANTHER" id="PTHR14025">
    <property type="entry name" value="FANCONI ANEMIA GROUP M FANCM FAMILY MEMBER"/>
    <property type="match status" value="1"/>
</dbReference>
<dbReference type="PANTHER" id="PTHR14025:SF20">
    <property type="entry name" value="FANCONI ANEMIA GROUP M PROTEIN"/>
    <property type="match status" value="1"/>
</dbReference>
<dbReference type="Pfam" id="PF00271">
    <property type="entry name" value="Helicase_C"/>
    <property type="match status" value="1"/>
</dbReference>
<dbReference type="Pfam" id="PF04851">
    <property type="entry name" value="ResIII"/>
    <property type="match status" value="1"/>
</dbReference>
<dbReference type="SMART" id="SM00487">
    <property type="entry name" value="DEXDc"/>
    <property type="match status" value="1"/>
</dbReference>
<dbReference type="SMART" id="SM00490">
    <property type="entry name" value="HELICc"/>
    <property type="match status" value="1"/>
</dbReference>
<dbReference type="SUPFAM" id="SSF52540">
    <property type="entry name" value="P-loop containing nucleoside triphosphate hydrolases"/>
    <property type="match status" value="1"/>
</dbReference>
<dbReference type="PROSITE" id="PS51192">
    <property type="entry name" value="HELICASE_ATP_BIND_1"/>
    <property type="match status" value="1"/>
</dbReference>
<dbReference type="PROSITE" id="PS51194">
    <property type="entry name" value="HELICASE_CTER"/>
    <property type="match status" value="1"/>
</dbReference>
<keyword id="KW-0067">ATP-binding</keyword>
<keyword id="KW-0227">DNA damage</keyword>
<keyword id="KW-0234">DNA repair</keyword>
<keyword id="KW-0238">DNA-binding</keyword>
<keyword id="KW-0347">Helicase</keyword>
<keyword id="KW-0378">Hydrolase</keyword>
<keyword id="KW-0547">Nucleotide-binding</keyword>
<keyword id="KW-0539">Nucleus</keyword>